<feature type="chain" id="PRO_0000147865" description="Phosphoglucosamine mutase">
    <location>
        <begin position="1"/>
        <end position="445"/>
    </location>
</feature>
<feature type="active site" description="Phosphoserine intermediate" evidence="1">
    <location>
        <position position="99"/>
    </location>
</feature>
<feature type="binding site" description="via phosphate group" evidence="1">
    <location>
        <position position="99"/>
    </location>
    <ligand>
        <name>Mg(2+)</name>
        <dbReference type="ChEBI" id="CHEBI:18420"/>
    </ligand>
</feature>
<feature type="binding site" evidence="1">
    <location>
        <position position="242"/>
    </location>
    <ligand>
        <name>Mg(2+)</name>
        <dbReference type="ChEBI" id="CHEBI:18420"/>
    </ligand>
</feature>
<feature type="binding site" evidence="1">
    <location>
        <position position="244"/>
    </location>
    <ligand>
        <name>Mg(2+)</name>
        <dbReference type="ChEBI" id="CHEBI:18420"/>
    </ligand>
</feature>
<feature type="binding site" evidence="1">
    <location>
        <position position="246"/>
    </location>
    <ligand>
        <name>Mg(2+)</name>
        <dbReference type="ChEBI" id="CHEBI:18420"/>
    </ligand>
</feature>
<feature type="modified residue" description="Phosphoserine" evidence="1">
    <location>
        <position position="99"/>
    </location>
</feature>
<reference key="1">
    <citation type="journal article" date="2005" name="PLoS Biol.">
        <title>Major structural differences and novel potential virulence mechanisms from the genomes of multiple Campylobacter species.</title>
        <authorList>
            <person name="Fouts D.E."/>
            <person name="Mongodin E.F."/>
            <person name="Mandrell R.E."/>
            <person name="Miller W.G."/>
            <person name="Rasko D.A."/>
            <person name="Ravel J."/>
            <person name="Brinkac L.M."/>
            <person name="DeBoy R.T."/>
            <person name="Parker C.T."/>
            <person name="Daugherty S.C."/>
            <person name="Dodson R.J."/>
            <person name="Durkin A.S."/>
            <person name="Madupu R."/>
            <person name="Sullivan S.A."/>
            <person name="Shetty J.U."/>
            <person name="Ayodeji M.A."/>
            <person name="Shvartsbeyn A."/>
            <person name="Schatz M.C."/>
            <person name="Badger J.H."/>
            <person name="Fraser C.M."/>
            <person name="Nelson K.E."/>
        </authorList>
    </citation>
    <scope>NUCLEOTIDE SEQUENCE [LARGE SCALE GENOMIC DNA]</scope>
    <source>
        <strain>RM1221</strain>
    </source>
</reference>
<evidence type="ECO:0000255" key="1">
    <source>
        <dbReference type="HAMAP-Rule" id="MF_01554"/>
    </source>
</evidence>
<keyword id="KW-0413">Isomerase</keyword>
<keyword id="KW-0460">Magnesium</keyword>
<keyword id="KW-0479">Metal-binding</keyword>
<keyword id="KW-0597">Phosphoprotein</keyword>
<accession>Q5HWA7</accession>
<name>GLMM_CAMJR</name>
<comment type="function">
    <text evidence="1">Catalyzes the conversion of glucosamine-6-phosphate to glucosamine-1-phosphate.</text>
</comment>
<comment type="catalytic activity">
    <reaction evidence="1">
        <text>alpha-D-glucosamine 1-phosphate = D-glucosamine 6-phosphate</text>
        <dbReference type="Rhea" id="RHEA:23424"/>
        <dbReference type="ChEBI" id="CHEBI:58516"/>
        <dbReference type="ChEBI" id="CHEBI:58725"/>
        <dbReference type="EC" id="5.4.2.10"/>
    </reaction>
</comment>
<comment type="cofactor">
    <cofactor evidence="1">
        <name>Mg(2+)</name>
        <dbReference type="ChEBI" id="CHEBI:18420"/>
    </cofactor>
    <text evidence="1">Binds 1 Mg(2+) ion per subunit.</text>
</comment>
<comment type="PTM">
    <text evidence="1">Activated by phosphorylation.</text>
</comment>
<comment type="similarity">
    <text evidence="1">Belongs to the phosphohexose mutase family.</text>
</comment>
<organism>
    <name type="scientific">Campylobacter jejuni (strain RM1221)</name>
    <dbReference type="NCBI Taxonomy" id="195099"/>
    <lineage>
        <taxon>Bacteria</taxon>
        <taxon>Pseudomonadati</taxon>
        <taxon>Campylobacterota</taxon>
        <taxon>Epsilonproteobacteria</taxon>
        <taxon>Campylobacterales</taxon>
        <taxon>Campylobacteraceae</taxon>
        <taxon>Campylobacter</taxon>
    </lineage>
</organism>
<dbReference type="EC" id="5.4.2.10" evidence="1"/>
<dbReference type="EMBL" id="CP000025">
    <property type="protein sequence ID" value="AAW34998.1"/>
    <property type="molecule type" value="Genomic_DNA"/>
</dbReference>
<dbReference type="RefSeq" id="WP_002854369.1">
    <property type="nucleotide sequence ID" value="NC_003912.7"/>
</dbReference>
<dbReference type="SMR" id="Q5HWA7"/>
<dbReference type="KEGG" id="cjr:CJE0409"/>
<dbReference type="HOGENOM" id="CLU_016950_7_0_7"/>
<dbReference type="GO" id="GO:0005829">
    <property type="term" value="C:cytosol"/>
    <property type="evidence" value="ECO:0007669"/>
    <property type="project" value="TreeGrafter"/>
</dbReference>
<dbReference type="GO" id="GO:0000287">
    <property type="term" value="F:magnesium ion binding"/>
    <property type="evidence" value="ECO:0007669"/>
    <property type="project" value="UniProtKB-UniRule"/>
</dbReference>
<dbReference type="GO" id="GO:0008966">
    <property type="term" value="F:phosphoglucosamine mutase activity"/>
    <property type="evidence" value="ECO:0007669"/>
    <property type="project" value="UniProtKB-UniRule"/>
</dbReference>
<dbReference type="GO" id="GO:0004615">
    <property type="term" value="F:phosphomannomutase activity"/>
    <property type="evidence" value="ECO:0007669"/>
    <property type="project" value="TreeGrafter"/>
</dbReference>
<dbReference type="GO" id="GO:0005975">
    <property type="term" value="P:carbohydrate metabolic process"/>
    <property type="evidence" value="ECO:0007669"/>
    <property type="project" value="InterPro"/>
</dbReference>
<dbReference type="GO" id="GO:0009252">
    <property type="term" value="P:peptidoglycan biosynthetic process"/>
    <property type="evidence" value="ECO:0007669"/>
    <property type="project" value="TreeGrafter"/>
</dbReference>
<dbReference type="GO" id="GO:0006048">
    <property type="term" value="P:UDP-N-acetylglucosamine biosynthetic process"/>
    <property type="evidence" value="ECO:0007669"/>
    <property type="project" value="TreeGrafter"/>
</dbReference>
<dbReference type="CDD" id="cd05802">
    <property type="entry name" value="GlmM"/>
    <property type="match status" value="1"/>
</dbReference>
<dbReference type="FunFam" id="3.40.120.10:FF:000001">
    <property type="entry name" value="Phosphoglucosamine mutase"/>
    <property type="match status" value="1"/>
</dbReference>
<dbReference type="FunFam" id="3.40.120.10:FF:000003">
    <property type="entry name" value="Phosphoglucosamine mutase"/>
    <property type="match status" value="1"/>
</dbReference>
<dbReference type="Gene3D" id="3.40.120.10">
    <property type="entry name" value="Alpha-D-Glucose-1,6-Bisphosphate, subunit A, domain 3"/>
    <property type="match status" value="3"/>
</dbReference>
<dbReference type="Gene3D" id="3.30.310.50">
    <property type="entry name" value="Alpha-D-phosphohexomutase, C-terminal domain"/>
    <property type="match status" value="1"/>
</dbReference>
<dbReference type="HAMAP" id="MF_01554_B">
    <property type="entry name" value="GlmM_B"/>
    <property type="match status" value="1"/>
</dbReference>
<dbReference type="InterPro" id="IPR005844">
    <property type="entry name" value="A-D-PHexomutase_a/b/a-I"/>
</dbReference>
<dbReference type="InterPro" id="IPR016055">
    <property type="entry name" value="A-D-PHexomutase_a/b/a-I/II/III"/>
</dbReference>
<dbReference type="InterPro" id="IPR005845">
    <property type="entry name" value="A-D-PHexomutase_a/b/a-II"/>
</dbReference>
<dbReference type="InterPro" id="IPR005846">
    <property type="entry name" value="A-D-PHexomutase_a/b/a-III"/>
</dbReference>
<dbReference type="InterPro" id="IPR005843">
    <property type="entry name" value="A-D-PHexomutase_C"/>
</dbReference>
<dbReference type="InterPro" id="IPR036900">
    <property type="entry name" value="A-D-PHexomutase_C_sf"/>
</dbReference>
<dbReference type="InterPro" id="IPR016066">
    <property type="entry name" value="A-D-PHexomutase_CS"/>
</dbReference>
<dbReference type="InterPro" id="IPR005841">
    <property type="entry name" value="Alpha-D-phosphohexomutase_SF"/>
</dbReference>
<dbReference type="InterPro" id="IPR006352">
    <property type="entry name" value="GlmM_bact"/>
</dbReference>
<dbReference type="InterPro" id="IPR050060">
    <property type="entry name" value="Phosphoglucosamine_mutase"/>
</dbReference>
<dbReference type="NCBIfam" id="TIGR01455">
    <property type="entry name" value="glmM"/>
    <property type="match status" value="1"/>
</dbReference>
<dbReference type="NCBIfam" id="NF008139">
    <property type="entry name" value="PRK10887.1"/>
    <property type="match status" value="1"/>
</dbReference>
<dbReference type="PANTHER" id="PTHR42946:SF1">
    <property type="entry name" value="PHOSPHOGLUCOMUTASE (ALPHA-D-GLUCOSE-1,6-BISPHOSPHATE-DEPENDENT)"/>
    <property type="match status" value="1"/>
</dbReference>
<dbReference type="PANTHER" id="PTHR42946">
    <property type="entry name" value="PHOSPHOHEXOSE MUTASE"/>
    <property type="match status" value="1"/>
</dbReference>
<dbReference type="Pfam" id="PF02878">
    <property type="entry name" value="PGM_PMM_I"/>
    <property type="match status" value="1"/>
</dbReference>
<dbReference type="Pfam" id="PF02879">
    <property type="entry name" value="PGM_PMM_II"/>
    <property type="match status" value="1"/>
</dbReference>
<dbReference type="Pfam" id="PF02880">
    <property type="entry name" value="PGM_PMM_III"/>
    <property type="match status" value="1"/>
</dbReference>
<dbReference type="Pfam" id="PF00408">
    <property type="entry name" value="PGM_PMM_IV"/>
    <property type="match status" value="1"/>
</dbReference>
<dbReference type="PRINTS" id="PR00509">
    <property type="entry name" value="PGMPMM"/>
</dbReference>
<dbReference type="SUPFAM" id="SSF55957">
    <property type="entry name" value="Phosphoglucomutase, C-terminal domain"/>
    <property type="match status" value="1"/>
</dbReference>
<dbReference type="SUPFAM" id="SSF53738">
    <property type="entry name" value="Phosphoglucomutase, first 3 domains"/>
    <property type="match status" value="3"/>
</dbReference>
<dbReference type="PROSITE" id="PS00710">
    <property type="entry name" value="PGM_PMM"/>
    <property type="match status" value="1"/>
</dbReference>
<protein>
    <recommendedName>
        <fullName evidence="1">Phosphoglucosamine mutase</fullName>
        <ecNumber evidence="1">5.4.2.10</ecNumber>
    </recommendedName>
</protein>
<proteinExistence type="inferred from homology"/>
<gene>
    <name evidence="1" type="primary">glmM</name>
    <name type="ordered locus">CJE0409</name>
</gene>
<sequence length="445" mass="48866">MRLFGTDGVRGKAGEFLDSFLAMRLAMAAGIYFKDKSITNNILVGKDTRRSGYMIENAIVSGLTSIGYNVIQIGPMPTPAIAFLTEDMRCDAGIMISASHNPYYDNGIKFFDAHGNKLSEDIEKKIEEIYFDDKLIQASKVDMEKIGQAKRIDDVIGRYIVSIKNSFPKDLTLKSLRVVLDVAHGAAYKVAPTVFKELGAEVIVMSDKPNGLNINENCGALHPVNLAAEVKRLRADVGFAFDGDADRLVVVDEKGEVANGDSLLGVLALYLKEQGKLQSSVVATIMSNGALKEFLNKHGIELDTCNVGDKYVLEKLKANGGNFGGEQSGHIIFSDYAKTGDGLIAALQFSALMLSKKKSASSILGQVKPYPQLLINLKIAEKKDLDKIKGLKELKKDLENKNINTLFRYSGTENLIRLLLEARDIKLLEKEMKNVVEFFKKALNG</sequence>